<organism>
    <name type="scientific">Salmonella paratyphi A (strain ATCC 9150 / SARB42)</name>
    <dbReference type="NCBI Taxonomy" id="295319"/>
    <lineage>
        <taxon>Bacteria</taxon>
        <taxon>Pseudomonadati</taxon>
        <taxon>Pseudomonadota</taxon>
        <taxon>Gammaproteobacteria</taxon>
        <taxon>Enterobacterales</taxon>
        <taxon>Enterobacteriaceae</taxon>
        <taxon>Salmonella</taxon>
    </lineage>
</organism>
<feature type="chain" id="PRO_0000071646" description="Glutathione-regulated potassium-efflux system ancillary protein KefG">
    <location>
        <begin position="1"/>
        <end position="183"/>
    </location>
</feature>
<protein>
    <recommendedName>
        <fullName evidence="1">Glutathione-regulated potassium-efflux system ancillary protein KefG</fullName>
    </recommendedName>
    <alternativeName>
        <fullName evidence="1">Putative quinone oxidoreductase KefG</fullName>
        <ecNumber evidence="1">1.6.5.2</ecNumber>
    </alternativeName>
</protein>
<reference key="1">
    <citation type="journal article" date="2004" name="Nat. Genet.">
        <title>Comparison of genome degradation in Paratyphi A and Typhi, human-restricted serovars of Salmonella enterica that cause typhoid.</title>
        <authorList>
            <person name="McClelland M."/>
            <person name="Sanderson K.E."/>
            <person name="Clifton S.W."/>
            <person name="Latreille P."/>
            <person name="Porwollik S."/>
            <person name="Sabo A."/>
            <person name="Meyer R."/>
            <person name="Bieri T."/>
            <person name="Ozersky P."/>
            <person name="McLellan M."/>
            <person name="Harkins C.R."/>
            <person name="Wang C."/>
            <person name="Nguyen C."/>
            <person name="Berghoff A."/>
            <person name="Elliott G."/>
            <person name="Kohlberg S."/>
            <person name="Strong C."/>
            <person name="Du F."/>
            <person name="Carter J."/>
            <person name="Kremizki C."/>
            <person name="Layman D."/>
            <person name="Leonard S."/>
            <person name="Sun H."/>
            <person name="Fulton L."/>
            <person name="Nash W."/>
            <person name="Miner T."/>
            <person name="Minx P."/>
            <person name="Delehaunty K."/>
            <person name="Fronick C."/>
            <person name="Magrini V."/>
            <person name="Nhan M."/>
            <person name="Warren W."/>
            <person name="Florea L."/>
            <person name="Spieth J."/>
            <person name="Wilson R.K."/>
        </authorList>
    </citation>
    <scope>NUCLEOTIDE SEQUENCE [LARGE SCALE GENOMIC DNA]</scope>
    <source>
        <strain>ATCC 9150 / SARB42</strain>
    </source>
</reference>
<proteinExistence type="inferred from homology"/>
<keyword id="KW-0997">Cell inner membrane</keyword>
<keyword id="KW-1003">Cell membrane</keyword>
<keyword id="KW-0472">Membrane</keyword>
<keyword id="KW-0520">NAD</keyword>
<keyword id="KW-0560">Oxidoreductase</keyword>
<name>KEFG_SALPA</name>
<evidence type="ECO:0000255" key="1">
    <source>
        <dbReference type="HAMAP-Rule" id="MF_01415"/>
    </source>
</evidence>
<accession>Q5PL20</accession>
<sequence length="183" mass="20927">MSQPAKVLLLYAHPESQDSVANRVLLKPAIQHNNVTVHDLYARYPDFFIDTPYEQALLREHDVIVFQHPLYTYSCPALLKEWLDRVLSRGFASGPGGNQLVGKYWRSVITTGEPESAYRYDALNRYPMSDVLRPFELTAAMCRMHWMPPIIVYWARRQSPQTLASHAKAYGEWLANPVSAGGY</sequence>
<gene>
    <name evidence="1" type="primary">kefG</name>
    <name type="ordered locus">SPA3324</name>
</gene>
<comment type="function">
    <text evidence="1">Regulatory subunit of a potassium efflux system that confers protection against electrophiles. Required for full activity of KefB.</text>
</comment>
<comment type="catalytic activity">
    <reaction evidence="1">
        <text>a quinone + NADH + H(+) = a quinol + NAD(+)</text>
        <dbReference type="Rhea" id="RHEA:46160"/>
        <dbReference type="ChEBI" id="CHEBI:15378"/>
        <dbReference type="ChEBI" id="CHEBI:24646"/>
        <dbReference type="ChEBI" id="CHEBI:57540"/>
        <dbReference type="ChEBI" id="CHEBI:57945"/>
        <dbReference type="ChEBI" id="CHEBI:132124"/>
        <dbReference type="EC" id="1.6.5.2"/>
    </reaction>
</comment>
<comment type="catalytic activity">
    <reaction evidence="1">
        <text>a quinone + NADPH + H(+) = a quinol + NADP(+)</text>
        <dbReference type="Rhea" id="RHEA:46164"/>
        <dbReference type="ChEBI" id="CHEBI:15378"/>
        <dbReference type="ChEBI" id="CHEBI:24646"/>
        <dbReference type="ChEBI" id="CHEBI:57783"/>
        <dbReference type="ChEBI" id="CHEBI:58349"/>
        <dbReference type="ChEBI" id="CHEBI:132124"/>
        <dbReference type="EC" id="1.6.5.2"/>
    </reaction>
</comment>
<comment type="subunit">
    <text evidence="1">Interacts with KefB.</text>
</comment>
<comment type="subcellular location">
    <subcellularLocation>
        <location evidence="1">Cell inner membrane</location>
        <topology evidence="1">Peripheral membrane protein</topology>
        <orientation evidence="1">Cytoplasmic side</orientation>
    </subcellularLocation>
</comment>
<comment type="similarity">
    <text evidence="1">Belongs to the NAD(P)H dehydrogenase (quinone) family. KefG subfamily.</text>
</comment>
<dbReference type="EC" id="1.6.5.2" evidence="1"/>
<dbReference type="EMBL" id="CP000026">
    <property type="protein sequence ID" value="AAV79140.1"/>
    <property type="molecule type" value="Genomic_DNA"/>
</dbReference>
<dbReference type="RefSeq" id="WP_000081820.1">
    <property type="nucleotide sequence ID" value="NC_006511.1"/>
</dbReference>
<dbReference type="SMR" id="Q5PL20"/>
<dbReference type="KEGG" id="spt:SPA3324"/>
<dbReference type="HOGENOM" id="CLU_058643_0_1_6"/>
<dbReference type="Proteomes" id="UP000008185">
    <property type="component" value="Chromosome"/>
</dbReference>
<dbReference type="GO" id="GO:0005886">
    <property type="term" value="C:plasma membrane"/>
    <property type="evidence" value="ECO:0007669"/>
    <property type="project" value="UniProtKB-SubCell"/>
</dbReference>
<dbReference type="GO" id="GO:0009055">
    <property type="term" value="F:electron transfer activity"/>
    <property type="evidence" value="ECO:0007669"/>
    <property type="project" value="TreeGrafter"/>
</dbReference>
<dbReference type="GO" id="GO:0010181">
    <property type="term" value="F:FMN binding"/>
    <property type="evidence" value="ECO:0007669"/>
    <property type="project" value="TreeGrafter"/>
</dbReference>
<dbReference type="GO" id="GO:0050136">
    <property type="term" value="F:NADH:ubiquinone reductase (non-electrogenic) activity"/>
    <property type="evidence" value="ECO:0007669"/>
    <property type="project" value="RHEA"/>
</dbReference>
<dbReference type="GO" id="GO:0008753">
    <property type="term" value="F:NADPH dehydrogenase (quinone) activity"/>
    <property type="evidence" value="ECO:0007669"/>
    <property type="project" value="RHEA"/>
</dbReference>
<dbReference type="GO" id="GO:1901381">
    <property type="term" value="P:positive regulation of potassium ion transmembrane transport"/>
    <property type="evidence" value="ECO:0007669"/>
    <property type="project" value="UniProtKB-UniRule"/>
</dbReference>
<dbReference type="GO" id="GO:0006813">
    <property type="term" value="P:potassium ion transport"/>
    <property type="evidence" value="ECO:0007669"/>
    <property type="project" value="InterPro"/>
</dbReference>
<dbReference type="FunFam" id="3.40.50.360:FF:000013">
    <property type="entry name" value="Glutathione-regulated potassium-efflux system ancillary protein KefG"/>
    <property type="match status" value="1"/>
</dbReference>
<dbReference type="Gene3D" id="3.40.50.360">
    <property type="match status" value="1"/>
</dbReference>
<dbReference type="HAMAP" id="MF_01415">
    <property type="entry name" value="K_H_efflux_KefG"/>
    <property type="match status" value="1"/>
</dbReference>
<dbReference type="InterPro" id="IPR003680">
    <property type="entry name" value="Flavodoxin_fold"/>
</dbReference>
<dbReference type="InterPro" id="IPR029039">
    <property type="entry name" value="Flavoprotein-like_sf"/>
</dbReference>
<dbReference type="InterPro" id="IPR023947">
    <property type="entry name" value="K_H_efflux_KefG"/>
</dbReference>
<dbReference type="InterPro" id="IPR046980">
    <property type="entry name" value="KefG/KefF"/>
</dbReference>
<dbReference type="NCBIfam" id="NF003430">
    <property type="entry name" value="PRK04930.1"/>
    <property type="match status" value="1"/>
</dbReference>
<dbReference type="PANTHER" id="PTHR47307">
    <property type="entry name" value="GLUTATHIONE-REGULATED POTASSIUM-EFFLUX SYSTEM ANCILLARY PROTEIN KEFG"/>
    <property type="match status" value="1"/>
</dbReference>
<dbReference type="PANTHER" id="PTHR47307:SF1">
    <property type="entry name" value="GLUTATHIONE-REGULATED POTASSIUM-EFFLUX SYSTEM ANCILLARY PROTEIN KEFG"/>
    <property type="match status" value="1"/>
</dbReference>
<dbReference type="Pfam" id="PF02525">
    <property type="entry name" value="Flavodoxin_2"/>
    <property type="match status" value="1"/>
</dbReference>
<dbReference type="SUPFAM" id="SSF52218">
    <property type="entry name" value="Flavoproteins"/>
    <property type="match status" value="1"/>
</dbReference>